<dbReference type="EC" id="4.6.1.-" evidence="4"/>
<dbReference type="EMBL" id="FJ171397">
    <property type="protein sequence ID" value="ACN48893.1"/>
    <property type="molecule type" value="mRNA"/>
</dbReference>
<dbReference type="SMR" id="C0JAW2"/>
<dbReference type="GO" id="GO:0005576">
    <property type="term" value="C:extracellular region"/>
    <property type="evidence" value="ECO:0007669"/>
    <property type="project" value="UniProtKB-SubCell"/>
</dbReference>
<dbReference type="GO" id="GO:0016829">
    <property type="term" value="F:lyase activity"/>
    <property type="evidence" value="ECO:0007669"/>
    <property type="project" value="UniProtKB-KW"/>
</dbReference>
<dbReference type="GO" id="GO:0046872">
    <property type="term" value="F:metal ion binding"/>
    <property type="evidence" value="ECO:0007669"/>
    <property type="project" value="UniProtKB-KW"/>
</dbReference>
<dbReference type="GO" id="GO:0008081">
    <property type="term" value="F:phosphoric diester hydrolase activity"/>
    <property type="evidence" value="ECO:0007669"/>
    <property type="project" value="InterPro"/>
</dbReference>
<dbReference type="GO" id="GO:0090729">
    <property type="term" value="F:toxin activity"/>
    <property type="evidence" value="ECO:0007669"/>
    <property type="project" value="UniProtKB-KW"/>
</dbReference>
<dbReference type="GO" id="GO:0031640">
    <property type="term" value="P:killing of cells of another organism"/>
    <property type="evidence" value="ECO:0007669"/>
    <property type="project" value="UniProtKB-KW"/>
</dbReference>
<dbReference type="GO" id="GO:0016042">
    <property type="term" value="P:lipid catabolic process"/>
    <property type="evidence" value="ECO:0007669"/>
    <property type="project" value="UniProtKB-KW"/>
</dbReference>
<dbReference type="CDD" id="cd08576">
    <property type="entry name" value="GDPD_like_SMaseD_PLD"/>
    <property type="match status" value="1"/>
</dbReference>
<dbReference type="Gene3D" id="3.20.20.190">
    <property type="entry name" value="Phosphatidylinositol (PI) phosphodiesterase"/>
    <property type="match status" value="1"/>
</dbReference>
<dbReference type="InterPro" id="IPR017946">
    <property type="entry name" value="PLC-like_Pdiesterase_TIM-brl"/>
</dbReference>
<dbReference type="Pfam" id="PF13653">
    <property type="entry name" value="GDPD_2"/>
    <property type="match status" value="1"/>
</dbReference>
<dbReference type="SUPFAM" id="SSF51695">
    <property type="entry name" value="PLC-like phosphodiesterases"/>
    <property type="match status" value="1"/>
</dbReference>
<proteinExistence type="evidence at transcript level"/>
<accession>C0JAW2</accession>
<keyword id="KW-0204">Cytolysis</keyword>
<keyword id="KW-1061">Dermonecrotic toxin</keyword>
<keyword id="KW-1015">Disulfide bond</keyword>
<keyword id="KW-0325">Glycoprotein</keyword>
<keyword id="KW-0354">Hemolysis</keyword>
<keyword id="KW-0442">Lipid degradation</keyword>
<keyword id="KW-0443">Lipid metabolism</keyword>
<keyword id="KW-0456">Lyase</keyword>
<keyword id="KW-0460">Magnesium</keyword>
<keyword id="KW-0479">Metal-binding</keyword>
<keyword id="KW-0964">Secreted</keyword>
<keyword id="KW-0800">Toxin</keyword>
<protein>
    <recommendedName>
        <fullName evidence="7">Dermonecrotic toxin LapSicTox-alphaIB1b3</fullName>
        <ecNumber evidence="4">4.6.1.-</ecNumber>
    </recommendedName>
    <alternativeName>
        <fullName>Phospholipase D</fullName>
        <shortName>PLD</shortName>
    </alternativeName>
    <alternativeName>
        <fullName>Sphingomyelin phosphodiesterase D</fullName>
        <shortName>SMD</shortName>
        <shortName>SMase D</shortName>
        <shortName>Sphingomyelinase D</shortName>
    </alternativeName>
</protein>
<feature type="chain" id="PRO_0000392788" description="Dermonecrotic toxin LapSicTox-alphaIB1b3">
    <location>
        <begin position="1" status="less than"/>
        <end position="273"/>
    </location>
</feature>
<feature type="active site" evidence="5">
    <location>
        <position position="5"/>
    </location>
</feature>
<feature type="active site" description="Nucleophile" evidence="5">
    <location>
        <position position="41"/>
    </location>
</feature>
<feature type="binding site" evidence="5">
    <location>
        <position position="25"/>
    </location>
    <ligand>
        <name>Mg(2+)</name>
        <dbReference type="ChEBI" id="CHEBI:18420"/>
    </ligand>
</feature>
<feature type="binding site" evidence="5">
    <location>
        <position position="27"/>
    </location>
    <ligand>
        <name>Mg(2+)</name>
        <dbReference type="ChEBI" id="CHEBI:18420"/>
    </ligand>
</feature>
<feature type="binding site" evidence="5">
    <location>
        <position position="85"/>
    </location>
    <ligand>
        <name>Mg(2+)</name>
        <dbReference type="ChEBI" id="CHEBI:18420"/>
    </ligand>
</feature>
<feature type="glycosylation site" description="N-linked (GlcNAc...) asparagine" evidence="6">
    <location>
        <position position="250"/>
    </location>
</feature>
<feature type="disulfide bond" evidence="3">
    <location>
        <begin position="45"/>
        <end position="51"/>
    </location>
</feature>
<feature type="disulfide bond" evidence="3">
    <location>
        <begin position="47"/>
        <end position="190"/>
    </location>
</feature>
<feature type="non-terminal residue">
    <location>
        <position position="1"/>
    </location>
</feature>
<reference key="1">
    <citation type="journal article" date="2009" name="Mol. Biol. Evol.">
        <title>Molecular evolution, functional variation, and proposed nomenclature of the gene family that includes sphingomyelinase D in sicariid spider venoms.</title>
        <authorList>
            <person name="Binford G.J."/>
            <person name="Bodner M.R."/>
            <person name="Cordes M.H."/>
            <person name="Baldwin K.L."/>
            <person name="Rynerson M.R."/>
            <person name="Burns S.N."/>
            <person name="Zobel-Thropp P.A."/>
        </authorList>
    </citation>
    <scope>NUCLEOTIDE SEQUENCE [MRNA]</scope>
    <scope>NOMENCLATURE</scope>
    <source>
        <tissue>Venom gland</tissue>
    </source>
</reference>
<evidence type="ECO:0000250" key="1">
    <source>
        <dbReference type="UniProtKB" id="A0A0D4WTV1"/>
    </source>
</evidence>
<evidence type="ECO:0000250" key="2">
    <source>
        <dbReference type="UniProtKB" id="A0A0D4WV12"/>
    </source>
</evidence>
<evidence type="ECO:0000250" key="3">
    <source>
        <dbReference type="UniProtKB" id="P0CE80"/>
    </source>
</evidence>
<evidence type="ECO:0000250" key="4">
    <source>
        <dbReference type="UniProtKB" id="Q4ZFU2"/>
    </source>
</evidence>
<evidence type="ECO:0000250" key="5">
    <source>
        <dbReference type="UniProtKB" id="Q8I914"/>
    </source>
</evidence>
<evidence type="ECO:0000255" key="6"/>
<evidence type="ECO:0000303" key="7">
    <source>
    </source>
</evidence>
<evidence type="ECO:0000305" key="8"/>
<evidence type="ECO:0000305" key="9">
    <source>
    </source>
</evidence>
<name>A1KB3_LOXAP</name>
<sequence>WIMGHMVNAIAQIDEFVNLGANSIETDVSFDSSANPEYTYHGIPCDCGRTCTKWEHFNEFLKGLRKATTPGDSKYHEKLVLVVFDLKTGSLYDNQASDAGKKLAKSLLQNYWNNGNNGGGAYIVLSIPNLAHYKLITGFKEALTSEGHPELMDKVGYDFSGNDDIGDVANAYKKAGVTGHVWQSDGITNCLLRGLDRVRKAVANRDSSNGYINKVYYWTVDKRQSTRDALDAGVDGIMTNYPDVIADVLNESAYKAKFRIASYDDNPWETFKN</sequence>
<organism>
    <name type="scientific">Loxosceles apachea</name>
    <name type="common">Apache recluse spider</name>
    <dbReference type="NCBI Taxonomy" id="571518"/>
    <lineage>
        <taxon>Eukaryota</taxon>
        <taxon>Metazoa</taxon>
        <taxon>Ecdysozoa</taxon>
        <taxon>Arthropoda</taxon>
        <taxon>Chelicerata</taxon>
        <taxon>Arachnida</taxon>
        <taxon>Araneae</taxon>
        <taxon>Araneomorphae</taxon>
        <taxon>Haplogynae</taxon>
        <taxon>Scytodoidea</taxon>
        <taxon>Sicariidae</taxon>
        <taxon>Loxosceles</taxon>
    </lineage>
</organism>
<comment type="function">
    <text evidence="1 3">Dermonecrotic toxins cleave the phosphodiester linkage between the phosphate and headgroup of certain phospholipids (sphingolipid and lysolipid substrates), forming an alcohol (often choline) and a cyclic phosphate (By similarity). This toxin acts on sphingomyelin (SM) (By similarity). It may also act on ceramide phosphoethanolamine (CPE), lysophosphatidylcholine (LPC) and lysophosphatidylethanolamine (LPE), but not on lysophosphatidylserine (LPS), and lysophosphatidylglycerol (LPG) (By similarity). It acts by transphosphatidylation, releasing exclusively cyclic phosphate products as second products (By similarity). Induces dermonecrosis, hemolysis, increased vascular permeability, edema, inflammatory response, and platelet aggregation (By similarity).</text>
</comment>
<comment type="catalytic activity">
    <reaction evidence="1">
        <text>an N-(acyl)-sphingosylphosphocholine = an N-(acyl)-sphingosyl-1,3-cyclic phosphate + choline</text>
        <dbReference type="Rhea" id="RHEA:60652"/>
        <dbReference type="ChEBI" id="CHEBI:15354"/>
        <dbReference type="ChEBI" id="CHEBI:64583"/>
        <dbReference type="ChEBI" id="CHEBI:143892"/>
    </reaction>
</comment>
<comment type="catalytic activity">
    <reaction evidence="1">
        <text>an N-(acyl)-sphingosylphosphoethanolamine = an N-(acyl)-sphingosyl-1,3-cyclic phosphate + ethanolamine</text>
        <dbReference type="Rhea" id="RHEA:60648"/>
        <dbReference type="ChEBI" id="CHEBI:57603"/>
        <dbReference type="ChEBI" id="CHEBI:143891"/>
        <dbReference type="ChEBI" id="CHEBI:143892"/>
    </reaction>
</comment>
<comment type="catalytic activity">
    <reaction evidence="1">
        <text>a 1-acyl-sn-glycero-3-phosphocholine = a 1-acyl-sn-glycero-2,3-cyclic phosphate + choline</text>
        <dbReference type="Rhea" id="RHEA:60700"/>
        <dbReference type="ChEBI" id="CHEBI:15354"/>
        <dbReference type="ChEBI" id="CHEBI:58168"/>
        <dbReference type="ChEBI" id="CHEBI:143947"/>
    </reaction>
</comment>
<comment type="catalytic activity">
    <reaction evidence="1">
        <text>a 1-acyl-sn-glycero-3-phosphoethanolamine = a 1-acyl-sn-glycero-2,3-cyclic phosphate + ethanolamine</text>
        <dbReference type="Rhea" id="RHEA:60704"/>
        <dbReference type="ChEBI" id="CHEBI:57603"/>
        <dbReference type="ChEBI" id="CHEBI:64381"/>
        <dbReference type="ChEBI" id="CHEBI:143947"/>
    </reaction>
</comment>
<comment type="cofactor">
    <cofactor evidence="5">
        <name>Mg(2+)</name>
        <dbReference type="ChEBI" id="CHEBI:18420"/>
    </cofactor>
    <text evidence="5">Binds 1 Mg(2+) ion per subunit.</text>
</comment>
<comment type="subcellular location">
    <subcellularLocation>
        <location evidence="9">Secreted</location>
    </subcellularLocation>
</comment>
<comment type="tissue specificity">
    <text evidence="9">Expressed by the venom gland.</text>
</comment>
<comment type="similarity">
    <text evidence="8">Belongs to the arthropod phospholipase D family. Class II subfamily.</text>
</comment>
<comment type="caution">
    <text evidence="1 2 4">The most common activity assay for dermonecrotic toxins detects enzymatic activity by monitoring choline release from substrate. Liberation of choline from sphingomyelin (SM) or lysophosphatidylcholine (LPC) is commonly assumed to result from substrate hydrolysis, giving either ceramide-1-phosphate (C1P) or lysophosphatidic acid (LPA), respectively, as a second product. However, two studies from Lajoie and colleagues (2013 and 2015) report the observation of exclusive formation of cyclic phosphate products as second products, resulting from intramolecular transphosphatidylation. Cyclic phosphates have vastly different biological properties from their monoester counterparts, and they may be relevant to the pathology of brown spider envenomation.</text>
</comment>